<comment type="function">
    <text evidence="1">Produces ATP from ADP in the presence of a proton gradient across the membrane. The alpha chain is a regulatory subunit.</text>
</comment>
<comment type="catalytic activity">
    <reaction evidence="1">
        <text>ATP + H2O + 4 H(+)(in) = ADP + phosphate + 5 H(+)(out)</text>
        <dbReference type="Rhea" id="RHEA:57720"/>
        <dbReference type="ChEBI" id="CHEBI:15377"/>
        <dbReference type="ChEBI" id="CHEBI:15378"/>
        <dbReference type="ChEBI" id="CHEBI:30616"/>
        <dbReference type="ChEBI" id="CHEBI:43474"/>
        <dbReference type="ChEBI" id="CHEBI:456216"/>
        <dbReference type="EC" id="7.1.2.2"/>
    </reaction>
</comment>
<comment type="activity regulation">
    <text evidence="2">Increases 2-fold following exposure to low pH.</text>
</comment>
<comment type="subunit">
    <text evidence="1">F-type ATPases have 2 components, CF(1) - the catalytic core - and CF(0) - the membrane proton channel. CF(1) has five subunits: alpha(3), beta(3), gamma(1), delta(1), epsilon(1). CF(0) has three main subunits: a(1), b(2) and c(9-12). The alpha and beta chains form an alternating ring which encloses part of the gamma chain. CF(1) is attached to CF(0) by a central stalk formed by the gamma and epsilon chains, while a peripheral stalk is formed by the delta and b chains.</text>
</comment>
<comment type="subcellular location">
    <subcellularLocation>
        <location evidence="1">Cell membrane</location>
        <topology evidence="1">Peripheral membrane protein</topology>
    </subcellularLocation>
</comment>
<comment type="induction">
    <text evidence="2">By low pH.</text>
</comment>
<comment type="similarity">
    <text evidence="1">Belongs to the ATPase alpha/beta chains family.</text>
</comment>
<keyword id="KW-0066">ATP synthesis</keyword>
<keyword id="KW-0067">ATP-binding</keyword>
<keyword id="KW-1003">Cell membrane</keyword>
<keyword id="KW-0139">CF(1)</keyword>
<keyword id="KW-0375">Hydrogen ion transport</keyword>
<keyword id="KW-0406">Ion transport</keyword>
<keyword id="KW-0472">Membrane</keyword>
<keyword id="KW-0547">Nucleotide-binding</keyword>
<keyword id="KW-1185">Reference proteome</keyword>
<keyword id="KW-1278">Translocase</keyword>
<keyword id="KW-0813">Transport</keyword>
<evidence type="ECO:0000255" key="1">
    <source>
        <dbReference type="HAMAP-Rule" id="MF_01346"/>
    </source>
</evidence>
<evidence type="ECO:0000269" key="2">
    <source>
    </source>
</evidence>
<evidence type="ECO:0000305" key="3"/>
<proteinExistence type="evidence at transcript level"/>
<accession>Q5FKY2</accession>
<accession>Q9RGY3</accession>
<protein>
    <recommendedName>
        <fullName evidence="1">ATP synthase subunit alpha</fullName>
        <ecNumber evidence="1">7.1.2.2</ecNumber>
    </recommendedName>
    <alternativeName>
        <fullName evidence="1">ATP synthase F1 sector subunit alpha</fullName>
    </alternativeName>
    <alternativeName>
        <fullName evidence="1">F-ATPase subunit alpha</fullName>
    </alternativeName>
</protein>
<reference key="1">
    <citation type="journal article" date="1999" name="Mol. Microbiol.">
        <title>Identification of the pH-inducible, proton-translocating F1F0-ATPase (atpBEFHAGDC) operon of Lactobacillus acidophilus by differential display: gene structure, cloning and characterization.</title>
        <authorList>
            <person name="Kullen M.J."/>
            <person name="Klaenhammer T.R."/>
        </authorList>
    </citation>
    <scope>NUCLEOTIDE SEQUENCE [GENOMIC DNA]</scope>
    <scope>ACTIVITY REGULATION</scope>
    <scope>INDUCTION</scope>
    <scope>PROBABLE OPERON</scope>
    <source>
        <strain>ATCC 700396 / NCK56 / N2 / NCFM</strain>
    </source>
</reference>
<reference key="2">
    <citation type="journal article" date="2005" name="Proc. Natl. Acad. Sci. U.S.A.">
        <title>Complete genome sequence of the probiotic lactic acid bacterium Lactobacillus acidophilus NCFM.</title>
        <authorList>
            <person name="Altermann E."/>
            <person name="Russell W.M."/>
            <person name="Azcarate-Peril M.A."/>
            <person name="Barrangou R."/>
            <person name="Buck B.L."/>
            <person name="McAuliffe O."/>
            <person name="Souther N."/>
            <person name="Dobson A."/>
            <person name="Duong T."/>
            <person name="Callanan M."/>
            <person name="Lick S."/>
            <person name="Hamrick A."/>
            <person name="Cano R."/>
            <person name="Klaenhammer T.R."/>
        </authorList>
    </citation>
    <scope>NUCLEOTIDE SEQUENCE [LARGE SCALE GENOMIC DNA]</scope>
    <source>
        <strain>ATCC 700396 / NCK56 / N2 / NCFM</strain>
    </source>
</reference>
<feature type="chain" id="PRO_0000238265" description="ATP synthase subunit alpha">
    <location>
        <begin position="1"/>
        <end position="503"/>
    </location>
</feature>
<feature type="binding site" evidence="1">
    <location>
        <begin position="169"/>
        <end position="176"/>
    </location>
    <ligand>
        <name>ATP</name>
        <dbReference type="ChEBI" id="CHEBI:30616"/>
    </ligand>
</feature>
<feature type="site" description="Required for activity" evidence="1">
    <location>
        <position position="362"/>
    </location>
</feature>
<feature type="sequence conflict" description="In Ref. 1; AAF22496." evidence="3" ref="1">
    <original>L</original>
    <variation>P</variation>
    <location>
        <position position="402"/>
    </location>
</feature>
<gene>
    <name evidence="1" type="primary">atpA</name>
    <name type="ordered locus">LBA0776</name>
</gene>
<name>ATPA_LACAC</name>
<dbReference type="EC" id="7.1.2.2" evidence="1"/>
<dbReference type="EMBL" id="AF098522">
    <property type="protein sequence ID" value="AAF22496.1"/>
    <property type="molecule type" value="Genomic_DNA"/>
</dbReference>
<dbReference type="EMBL" id="CP000033">
    <property type="protein sequence ID" value="AAV42642.1"/>
    <property type="molecule type" value="Genomic_DNA"/>
</dbReference>
<dbReference type="RefSeq" id="WP_011254246.1">
    <property type="nucleotide sequence ID" value="NC_006814.3"/>
</dbReference>
<dbReference type="RefSeq" id="YP_193673.1">
    <property type="nucleotide sequence ID" value="NC_006814.3"/>
</dbReference>
<dbReference type="SMR" id="Q5FKY2"/>
<dbReference type="STRING" id="272621.LBA0776"/>
<dbReference type="KEGG" id="lac:LBA0776"/>
<dbReference type="PATRIC" id="fig|272621.13.peg.738"/>
<dbReference type="eggNOG" id="COG0056">
    <property type="taxonomic scope" value="Bacteria"/>
</dbReference>
<dbReference type="HOGENOM" id="CLU_010091_2_1_9"/>
<dbReference type="OrthoDB" id="9803053at2"/>
<dbReference type="BioCyc" id="LACI272621:G1G49-792-MONOMER"/>
<dbReference type="Proteomes" id="UP000006381">
    <property type="component" value="Chromosome"/>
</dbReference>
<dbReference type="GO" id="GO:0005886">
    <property type="term" value="C:plasma membrane"/>
    <property type="evidence" value="ECO:0007669"/>
    <property type="project" value="UniProtKB-SubCell"/>
</dbReference>
<dbReference type="GO" id="GO:0045259">
    <property type="term" value="C:proton-transporting ATP synthase complex"/>
    <property type="evidence" value="ECO:0007669"/>
    <property type="project" value="UniProtKB-KW"/>
</dbReference>
<dbReference type="GO" id="GO:0043531">
    <property type="term" value="F:ADP binding"/>
    <property type="evidence" value="ECO:0007669"/>
    <property type="project" value="TreeGrafter"/>
</dbReference>
<dbReference type="GO" id="GO:0005524">
    <property type="term" value="F:ATP binding"/>
    <property type="evidence" value="ECO:0007669"/>
    <property type="project" value="UniProtKB-UniRule"/>
</dbReference>
<dbReference type="GO" id="GO:0046933">
    <property type="term" value="F:proton-transporting ATP synthase activity, rotational mechanism"/>
    <property type="evidence" value="ECO:0007669"/>
    <property type="project" value="UniProtKB-UniRule"/>
</dbReference>
<dbReference type="CDD" id="cd18113">
    <property type="entry name" value="ATP-synt_F1_alpha_C"/>
    <property type="match status" value="1"/>
</dbReference>
<dbReference type="CDD" id="cd18116">
    <property type="entry name" value="ATP-synt_F1_alpha_N"/>
    <property type="match status" value="1"/>
</dbReference>
<dbReference type="CDD" id="cd01132">
    <property type="entry name" value="F1-ATPase_alpha_CD"/>
    <property type="match status" value="1"/>
</dbReference>
<dbReference type="FunFam" id="1.20.150.20:FF:000001">
    <property type="entry name" value="ATP synthase subunit alpha"/>
    <property type="match status" value="1"/>
</dbReference>
<dbReference type="FunFam" id="2.40.30.20:FF:000001">
    <property type="entry name" value="ATP synthase subunit alpha"/>
    <property type="match status" value="1"/>
</dbReference>
<dbReference type="FunFam" id="3.40.50.300:FF:000002">
    <property type="entry name" value="ATP synthase subunit alpha"/>
    <property type="match status" value="1"/>
</dbReference>
<dbReference type="Gene3D" id="2.40.30.20">
    <property type="match status" value="1"/>
</dbReference>
<dbReference type="Gene3D" id="1.20.150.20">
    <property type="entry name" value="ATP synthase alpha/beta chain, C-terminal domain"/>
    <property type="match status" value="1"/>
</dbReference>
<dbReference type="Gene3D" id="3.40.50.300">
    <property type="entry name" value="P-loop containing nucleotide triphosphate hydrolases"/>
    <property type="match status" value="1"/>
</dbReference>
<dbReference type="HAMAP" id="MF_01346">
    <property type="entry name" value="ATP_synth_alpha_bact"/>
    <property type="match status" value="1"/>
</dbReference>
<dbReference type="InterPro" id="IPR023366">
    <property type="entry name" value="ATP_synth_asu-like_sf"/>
</dbReference>
<dbReference type="InterPro" id="IPR000793">
    <property type="entry name" value="ATP_synth_asu_C"/>
</dbReference>
<dbReference type="InterPro" id="IPR038376">
    <property type="entry name" value="ATP_synth_asu_C_sf"/>
</dbReference>
<dbReference type="InterPro" id="IPR033732">
    <property type="entry name" value="ATP_synth_F1_a_nt-bd_dom"/>
</dbReference>
<dbReference type="InterPro" id="IPR005294">
    <property type="entry name" value="ATP_synth_F1_asu"/>
</dbReference>
<dbReference type="InterPro" id="IPR020003">
    <property type="entry name" value="ATPase_a/bsu_AS"/>
</dbReference>
<dbReference type="InterPro" id="IPR004100">
    <property type="entry name" value="ATPase_F1/V1/A1_a/bsu_N"/>
</dbReference>
<dbReference type="InterPro" id="IPR036121">
    <property type="entry name" value="ATPase_F1/V1/A1_a/bsu_N_sf"/>
</dbReference>
<dbReference type="InterPro" id="IPR000194">
    <property type="entry name" value="ATPase_F1/V1/A1_a/bsu_nucl-bd"/>
</dbReference>
<dbReference type="InterPro" id="IPR027417">
    <property type="entry name" value="P-loop_NTPase"/>
</dbReference>
<dbReference type="NCBIfam" id="TIGR00962">
    <property type="entry name" value="atpA"/>
    <property type="match status" value="1"/>
</dbReference>
<dbReference type="NCBIfam" id="NF009884">
    <property type="entry name" value="PRK13343.1"/>
    <property type="match status" value="1"/>
</dbReference>
<dbReference type="PANTHER" id="PTHR48082">
    <property type="entry name" value="ATP SYNTHASE SUBUNIT ALPHA, MITOCHONDRIAL"/>
    <property type="match status" value="1"/>
</dbReference>
<dbReference type="PANTHER" id="PTHR48082:SF2">
    <property type="entry name" value="ATP SYNTHASE SUBUNIT ALPHA, MITOCHONDRIAL"/>
    <property type="match status" value="1"/>
</dbReference>
<dbReference type="Pfam" id="PF00006">
    <property type="entry name" value="ATP-synt_ab"/>
    <property type="match status" value="1"/>
</dbReference>
<dbReference type="Pfam" id="PF00306">
    <property type="entry name" value="ATP-synt_ab_C"/>
    <property type="match status" value="1"/>
</dbReference>
<dbReference type="Pfam" id="PF02874">
    <property type="entry name" value="ATP-synt_ab_N"/>
    <property type="match status" value="1"/>
</dbReference>
<dbReference type="PIRSF" id="PIRSF039088">
    <property type="entry name" value="F_ATPase_subunit_alpha"/>
    <property type="match status" value="1"/>
</dbReference>
<dbReference type="SUPFAM" id="SSF47917">
    <property type="entry name" value="C-terminal domain of alpha and beta subunits of F1 ATP synthase"/>
    <property type="match status" value="1"/>
</dbReference>
<dbReference type="SUPFAM" id="SSF50615">
    <property type="entry name" value="N-terminal domain of alpha and beta subunits of F1 ATP synthase"/>
    <property type="match status" value="1"/>
</dbReference>
<dbReference type="SUPFAM" id="SSF52540">
    <property type="entry name" value="P-loop containing nucleoside triphosphate hydrolases"/>
    <property type="match status" value="1"/>
</dbReference>
<dbReference type="PROSITE" id="PS00152">
    <property type="entry name" value="ATPASE_ALPHA_BETA"/>
    <property type="match status" value="1"/>
</dbReference>
<organism>
    <name type="scientific">Lactobacillus acidophilus (strain ATCC 700396 / NCK56 / N2 / NCFM)</name>
    <dbReference type="NCBI Taxonomy" id="272621"/>
    <lineage>
        <taxon>Bacteria</taxon>
        <taxon>Bacillati</taxon>
        <taxon>Bacillota</taxon>
        <taxon>Bacilli</taxon>
        <taxon>Lactobacillales</taxon>
        <taxon>Lactobacillaceae</taxon>
        <taxon>Lactobacillus</taxon>
    </lineage>
</organism>
<sequence length="503" mass="54932">MSIKAEEISSLIKQQLEHYDDKLDINEVGVVTYVGDGIARAHGLDDVLSGELLKFDNGSFGIAQNLESNDVGIIILGQFDNIREGDRVQRTGRIMEVPVGDALIGRVVNPLGQPVDGLGEIKSDKTRPIEAKAPGVMDRQSVNQPLQTGIKAIDALVPIGRGQRELIIGDRKTGKTSLAIDTILNQKGQDVICIYVAIGQKESTVRTQVETLKRFGAMDYTIVVEAGPSEPAPMLYIAPYAGTAMGEEFMYNGKDVLIVFDDLSKQAVAYRELSLLLRRPPGREAYPGDVFYLHSRLLERSAKLSDKLGGGSLTALPIIQTEAGDISAYIPTNVISITDGQIFLQSDLFFAGTRPAIDAGNSVSRVGGNAQIKAMKKVAGTLRTDLTAYRELESFAQFGSDLDQATQAKLNRGQRTVEVLKQPLHDPIPVEKQVLILYALTHGYLDAIPVEDISRFQNELFDNFDSSHADLLKTIRETGKLPDDKELSAAIEEFSESFTPSEK</sequence>